<protein>
    <recommendedName>
        <fullName evidence="1">Peptide methionine sulfoxide reductase MsrA</fullName>
        <shortName evidence="1">Protein-methionine-S-oxide reductase</shortName>
        <ecNumber evidence="1">1.8.4.11</ecNumber>
    </recommendedName>
    <alternativeName>
        <fullName evidence="1">Peptide-methionine (S)-S-oxide reductase</fullName>
        <shortName evidence="1">Peptide Met(O) reductase</shortName>
    </alternativeName>
</protein>
<keyword id="KW-0560">Oxidoreductase</keyword>
<accession>Q71YF6</accession>
<feature type="chain" id="PRO_0000138554" description="Peptide methionine sulfoxide reductase MsrA">
    <location>
        <begin position="1"/>
        <end position="177"/>
    </location>
</feature>
<feature type="active site" evidence="1">
    <location>
        <position position="15"/>
    </location>
</feature>
<evidence type="ECO:0000255" key="1">
    <source>
        <dbReference type="HAMAP-Rule" id="MF_01401"/>
    </source>
</evidence>
<gene>
    <name evidence="1" type="primary">msrA</name>
    <name type="ordered locus">LMOf2365_1888</name>
</gene>
<dbReference type="EC" id="1.8.4.11" evidence="1"/>
<dbReference type="EMBL" id="AE017262">
    <property type="protein sequence ID" value="AAT04658.1"/>
    <property type="molecule type" value="Genomic_DNA"/>
</dbReference>
<dbReference type="RefSeq" id="WP_003728282.1">
    <property type="nucleotide sequence ID" value="NC_002973.6"/>
</dbReference>
<dbReference type="SMR" id="Q71YF6"/>
<dbReference type="KEGG" id="lmf:LMOf2365_1888"/>
<dbReference type="HOGENOM" id="CLU_031040_10_1_9"/>
<dbReference type="GO" id="GO:0033744">
    <property type="term" value="F:L-methionine:thioredoxin-disulfide S-oxidoreductase activity"/>
    <property type="evidence" value="ECO:0007669"/>
    <property type="project" value="RHEA"/>
</dbReference>
<dbReference type="GO" id="GO:0008113">
    <property type="term" value="F:peptide-methionine (S)-S-oxide reductase activity"/>
    <property type="evidence" value="ECO:0007669"/>
    <property type="project" value="UniProtKB-UniRule"/>
</dbReference>
<dbReference type="GO" id="GO:0036211">
    <property type="term" value="P:protein modification process"/>
    <property type="evidence" value="ECO:0007669"/>
    <property type="project" value="UniProtKB-UniRule"/>
</dbReference>
<dbReference type="FunFam" id="3.30.1060.10:FF:000003">
    <property type="entry name" value="Peptide methionine sulfoxide reductase MsrA"/>
    <property type="match status" value="1"/>
</dbReference>
<dbReference type="Gene3D" id="3.30.1060.10">
    <property type="entry name" value="Peptide methionine sulphoxide reductase MsrA"/>
    <property type="match status" value="1"/>
</dbReference>
<dbReference type="HAMAP" id="MF_01401">
    <property type="entry name" value="MsrA"/>
    <property type="match status" value="1"/>
</dbReference>
<dbReference type="InterPro" id="IPR002569">
    <property type="entry name" value="Met_Sox_Rdtase_MsrA_dom"/>
</dbReference>
<dbReference type="InterPro" id="IPR036509">
    <property type="entry name" value="Met_Sox_Rdtase_MsrA_sf"/>
</dbReference>
<dbReference type="NCBIfam" id="TIGR00401">
    <property type="entry name" value="msrA"/>
    <property type="match status" value="1"/>
</dbReference>
<dbReference type="PANTHER" id="PTHR43774">
    <property type="entry name" value="PEPTIDE METHIONINE SULFOXIDE REDUCTASE"/>
    <property type="match status" value="1"/>
</dbReference>
<dbReference type="PANTHER" id="PTHR43774:SF1">
    <property type="entry name" value="PEPTIDE METHIONINE SULFOXIDE REDUCTASE MSRA 2"/>
    <property type="match status" value="1"/>
</dbReference>
<dbReference type="Pfam" id="PF01625">
    <property type="entry name" value="PMSR"/>
    <property type="match status" value="1"/>
</dbReference>
<dbReference type="SUPFAM" id="SSF55068">
    <property type="entry name" value="Peptide methionine sulfoxide reductase"/>
    <property type="match status" value="1"/>
</dbReference>
<organism>
    <name type="scientific">Listeria monocytogenes serotype 4b (strain F2365)</name>
    <dbReference type="NCBI Taxonomy" id="265669"/>
    <lineage>
        <taxon>Bacteria</taxon>
        <taxon>Bacillati</taxon>
        <taxon>Bacillota</taxon>
        <taxon>Bacilli</taxon>
        <taxon>Bacillales</taxon>
        <taxon>Listeriaceae</taxon>
        <taxon>Listeria</taxon>
    </lineage>
</organism>
<proteinExistence type="inferred from homology"/>
<sequence length="177" mass="19947">MTKESLEKATFAGGCFWCMVKPFDTQPGIEKVISGYTGGHTVNPTYKEVCSGTTGHTEAIQITFDPAVFPYEKLVEVYWQQTDPTDAAGQFVDRGDSYRPVIFYHNEEQKEIAEKSKAALDASGRFKKPIVTEIAKAETFYPAEEYHQDFYKKEKAHYEGYQVASGRAAFIDANWKG</sequence>
<comment type="function">
    <text evidence="1">Has an important function as a repair enzyme for proteins that have been inactivated by oxidation. Catalyzes the reversible oxidation-reduction of methionine sulfoxide in proteins to methionine.</text>
</comment>
<comment type="catalytic activity">
    <reaction evidence="1">
        <text>L-methionyl-[protein] + [thioredoxin]-disulfide + H2O = L-methionyl-(S)-S-oxide-[protein] + [thioredoxin]-dithiol</text>
        <dbReference type="Rhea" id="RHEA:14217"/>
        <dbReference type="Rhea" id="RHEA-COMP:10698"/>
        <dbReference type="Rhea" id="RHEA-COMP:10700"/>
        <dbReference type="Rhea" id="RHEA-COMP:12313"/>
        <dbReference type="Rhea" id="RHEA-COMP:12315"/>
        <dbReference type="ChEBI" id="CHEBI:15377"/>
        <dbReference type="ChEBI" id="CHEBI:16044"/>
        <dbReference type="ChEBI" id="CHEBI:29950"/>
        <dbReference type="ChEBI" id="CHEBI:44120"/>
        <dbReference type="ChEBI" id="CHEBI:50058"/>
        <dbReference type="EC" id="1.8.4.11"/>
    </reaction>
</comment>
<comment type="catalytic activity">
    <reaction evidence="1">
        <text>[thioredoxin]-disulfide + L-methionine + H2O = L-methionine (S)-S-oxide + [thioredoxin]-dithiol</text>
        <dbReference type="Rhea" id="RHEA:19993"/>
        <dbReference type="Rhea" id="RHEA-COMP:10698"/>
        <dbReference type="Rhea" id="RHEA-COMP:10700"/>
        <dbReference type="ChEBI" id="CHEBI:15377"/>
        <dbReference type="ChEBI" id="CHEBI:29950"/>
        <dbReference type="ChEBI" id="CHEBI:50058"/>
        <dbReference type="ChEBI" id="CHEBI:57844"/>
        <dbReference type="ChEBI" id="CHEBI:58772"/>
        <dbReference type="EC" id="1.8.4.11"/>
    </reaction>
</comment>
<comment type="similarity">
    <text evidence="1">Belongs to the MsrA Met sulfoxide reductase family.</text>
</comment>
<name>MSRA_LISMF</name>
<reference key="1">
    <citation type="journal article" date="2004" name="Nucleic Acids Res.">
        <title>Whole genome comparisons of serotype 4b and 1/2a strains of the food-borne pathogen Listeria monocytogenes reveal new insights into the core genome components of this species.</title>
        <authorList>
            <person name="Nelson K.E."/>
            <person name="Fouts D.E."/>
            <person name="Mongodin E.F."/>
            <person name="Ravel J."/>
            <person name="DeBoy R.T."/>
            <person name="Kolonay J.F."/>
            <person name="Rasko D.A."/>
            <person name="Angiuoli S.V."/>
            <person name="Gill S.R."/>
            <person name="Paulsen I.T."/>
            <person name="Peterson J.D."/>
            <person name="White O."/>
            <person name="Nelson W.C."/>
            <person name="Nierman W.C."/>
            <person name="Beanan M.J."/>
            <person name="Brinkac L.M."/>
            <person name="Daugherty S.C."/>
            <person name="Dodson R.J."/>
            <person name="Durkin A.S."/>
            <person name="Madupu R."/>
            <person name="Haft D.H."/>
            <person name="Selengut J."/>
            <person name="Van Aken S.E."/>
            <person name="Khouri H.M."/>
            <person name="Fedorova N."/>
            <person name="Forberger H.A."/>
            <person name="Tran B."/>
            <person name="Kathariou S."/>
            <person name="Wonderling L.D."/>
            <person name="Uhlich G.A."/>
            <person name="Bayles D.O."/>
            <person name="Luchansky J.B."/>
            <person name="Fraser C.M."/>
        </authorList>
    </citation>
    <scope>NUCLEOTIDE SEQUENCE [LARGE SCALE GENOMIC DNA]</scope>
    <source>
        <strain>F2365</strain>
    </source>
</reference>